<comment type="function">
    <text evidence="1">Negatively regulates the Hedgehog (SHH) signaling. Binds to the promoter of the SHH signaling mediator, GLI1, and inhibits its expression.</text>
</comment>
<comment type="subcellular location">
    <subcellularLocation>
        <location evidence="1">Cytoplasm</location>
        <location evidence="1">Cytoskeleton</location>
    </subcellularLocation>
    <subcellularLocation>
        <location evidence="1">Cytoplasm</location>
    </subcellularLocation>
    <subcellularLocation>
        <location evidence="1">Nucleus</location>
    </subcellularLocation>
    <subcellularLocation>
        <location evidence="1">Cytoplasmic vesicle</location>
        <location evidence="1">Secretory vesicle</location>
        <location evidence="1">Acrosome</location>
    </subcellularLocation>
    <text evidence="1">Both detected in the nucleus and cytoplasm, localizes to the nucleus where it binds chromatin upon stimulation of the Hedgehog pathway.</text>
</comment>
<comment type="similarity">
    <text evidence="2">Belongs to the actin family.</text>
</comment>
<sequence>MLDPARLDNPAVIFDNGSGLCKVGISGEIEPRHVINSVVGHPKFNIPSARSNRKRYFVGEEAQCMYDGLYLHYPIERGLVTRWDDMEKLWKDLFEWELGVKPNEQPVFMTEPSLNPQETREKTTEIMFEKFNVPALYLCNHAVGALCASACITGLVLDSGDGVTCTVPVYEGYSLPHAITKLYVAGRDITEHLTRLLLAKGYTFPCILNKAVVDDIKEKLCTVSLGYKDTEKNCQQFLRKYTLPDGNTIQMSDHLCQVPEVLFTPDHLGIHDLGISKMVCNSIMNCDTDIQENLFAEIVLSGGTTMFPGLQDRLLKELEDLAFEGTPIKITASSDRCYSAWIGGSVMTSMTTFKQMWVTAEDFKEYGAFVVQRKCF</sequence>
<gene>
    <name type="primary">Actrt1</name>
</gene>
<reference key="1">
    <citation type="journal article" date="2005" name="Science">
        <title>The transcriptional landscape of the mammalian genome.</title>
        <authorList>
            <person name="Carninci P."/>
            <person name="Kasukawa T."/>
            <person name="Katayama S."/>
            <person name="Gough J."/>
            <person name="Frith M.C."/>
            <person name="Maeda N."/>
            <person name="Oyama R."/>
            <person name="Ravasi T."/>
            <person name="Lenhard B."/>
            <person name="Wells C."/>
            <person name="Kodzius R."/>
            <person name="Shimokawa K."/>
            <person name="Bajic V.B."/>
            <person name="Brenner S.E."/>
            <person name="Batalov S."/>
            <person name="Forrest A.R."/>
            <person name="Zavolan M."/>
            <person name="Davis M.J."/>
            <person name="Wilming L.G."/>
            <person name="Aidinis V."/>
            <person name="Allen J.E."/>
            <person name="Ambesi-Impiombato A."/>
            <person name="Apweiler R."/>
            <person name="Aturaliya R.N."/>
            <person name="Bailey T.L."/>
            <person name="Bansal M."/>
            <person name="Baxter L."/>
            <person name="Beisel K.W."/>
            <person name="Bersano T."/>
            <person name="Bono H."/>
            <person name="Chalk A.M."/>
            <person name="Chiu K.P."/>
            <person name="Choudhary V."/>
            <person name="Christoffels A."/>
            <person name="Clutterbuck D.R."/>
            <person name="Crowe M.L."/>
            <person name="Dalla E."/>
            <person name="Dalrymple B.P."/>
            <person name="de Bono B."/>
            <person name="Della Gatta G."/>
            <person name="di Bernardo D."/>
            <person name="Down T."/>
            <person name="Engstrom P."/>
            <person name="Fagiolini M."/>
            <person name="Faulkner G."/>
            <person name="Fletcher C.F."/>
            <person name="Fukushima T."/>
            <person name="Furuno M."/>
            <person name="Futaki S."/>
            <person name="Gariboldi M."/>
            <person name="Georgii-Hemming P."/>
            <person name="Gingeras T.R."/>
            <person name="Gojobori T."/>
            <person name="Green R.E."/>
            <person name="Gustincich S."/>
            <person name="Harbers M."/>
            <person name="Hayashi Y."/>
            <person name="Hensch T.K."/>
            <person name="Hirokawa N."/>
            <person name="Hill D."/>
            <person name="Huminiecki L."/>
            <person name="Iacono M."/>
            <person name="Ikeo K."/>
            <person name="Iwama A."/>
            <person name="Ishikawa T."/>
            <person name="Jakt M."/>
            <person name="Kanapin A."/>
            <person name="Katoh M."/>
            <person name="Kawasawa Y."/>
            <person name="Kelso J."/>
            <person name="Kitamura H."/>
            <person name="Kitano H."/>
            <person name="Kollias G."/>
            <person name="Krishnan S.P."/>
            <person name="Kruger A."/>
            <person name="Kummerfeld S.K."/>
            <person name="Kurochkin I.V."/>
            <person name="Lareau L.F."/>
            <person name="Lazarevic D."/>
            <person name="Lipovich L."/>
            <person name="Liu J."/>
            <person name="Liuni S."/>
            <person name="McWilliam S."/>
            <person name="Madan Babu M."/>
            <person name="Madera M."/>
            <person name="Marchionni L."/>
            <person name="Matsuda H."/>
            <person name="Matsuzawa S."/>
            <person name="Miki H."/>
            <person name="Mignone F."/>
            <person name="Miyake S."/>
            <person name="Morris K."/>
            <person name="Mottagui-Tabar S."/>
            <person name="Mulder N."/>
            <person name="Nakano N."/>
            <person name="Nakauchi H."/>
            <person name="Ng P."/>
            <person name="Nilsson R."/>
            <person name="Nishiguchi S."/>
            <person name="Nishikawa S."/>
            <person name="Nori F."/>
            <person name="Ohara O."/>
            <person name="Okazaki Y."/>
            <person name="Orlando V."/>
            <person name="Pang K.C."/>
            <person name="Pavan W.J."/>
            <person name="Pavesi G."/>
            <person name="Pesole G."/>
            <person name="Petrovsky N."/>
            <person name="Piazza S."/>
            <person name="Reed J."/>
            <person name="Reid J.F."/>
            <person name="Ring B.Z."/>
            <person name="Ringwald M."/>
            <person name="Rost B."/>
            <person name="Ruan Y."/>
            <person name="Salzberg S.L."/>
            <person name="Sandelin A."/>
            <person name="Schneider C."/>
            <person name="Schoenbach C."/>
            <person name="Sekiguchi K."/>
            <person name="Semple C.A."/>
            <person name="Seno S."/>
            <person name="Sessa L."/>
            <person name="Sheng Y."/>
            <person name="Shibata Y."/>
            <person name="Shimada H."/>
            <person name="Shimada K."/>
            <person name="Silva D."/>
            <person name="Sinclair B."/>
            <person name="Sperling S."/>
            <person name="Stupka E."/>
            <person name="Sugiura K."/>
            <person name="Sultana R."/>
            <person name="Takenaka Y."/>
            <person name="Taki K."/>
            <person name="Tammoja K."/>
            <person name="Tan S.L."/>
            <person name="Tang S."/>
            <person name="Taylor M.S."/>
            <person name="Tegner J."/>
            <person name="Teichmann S.A."/>
            <person name="Ueda H.R."/>
            <person name="van Nimwegen E."/>
            <person name="Verardo R."/>
            <person name="Wei C.L."/>
            <person name="Yagi K."/>
            <person name="Yamanishi H."/>
            <person name="Zabarovsky E."/>
            <person name="Zhu S."/>
            <person name="Zimmer A."/>
            <person name="Hide W."/>
            <person name="Bult C."/>
            <person name="Grimmond S.M."/>
            <person name="Teasdale R.D."/>
            <person name="Liu E.T."/>
            <person name="Brusic V."/>
            <person name="Quackenbush J."/>
            <person name="Wahlestedt C."/>
            <person name="Mattick J.S."/>
            <person name="Hume D.A."/>
            <person name="Kai C."/>
            <person name="Sasaki D."/>
            <person name="Tomaru Y."/>
            <person name="Fukuda S."/>
            <person name="Kanamori-Katayama M."/>
            <person name="Suzuki M."/>
            <person name="Aoki J."/>
            <person name="Arakawa T."/>
            <person name="Iida J."/>
            <person name="Imamura K."/>
            <person name="Itoh M."/>
            <person name="Kato T."/>
            <person name="Kawaji H."/>
            <person name="Kawagashira N."/>
            <person name="Kawashima T."/>
            <person name="Kojima M."/>
            <person name="Kondo S."/>
            <person name="Konno H."/>
            <person name="Nakano K."/>
            <person name="Ninomiya N."/>
            <person name="Nishio T."/>
            <person name="Okada M."/>
            <person name="Plessy C."/>
            <person name="Shibata K."/>
            <person name="Shiraki T."/>
            <person name="Suzuki S."/>
            <person name="Tagami M."/>
            <person name="Waki K."/>
            <person name="Watahiki A."/>
            <person name="Okamura-Oho Y."/>
            <person name="Suzuki H."/>
            <person name="Kawai J."/>
            <person name="Hayashizaki Y."/>
        </authorList>
    </citation>
    <scope>NUCLEOTIDE SEQUENCE [LARGE SCALE MRNA]</scope>
    <source>
        <strain>C57BL/6J</strain>
        <tissue>Testis</tissue>
    </source>
</reference>
<reference key="2">
    <citation type="journal article" date="2004" name="Genome Res.">
        <title>The status, quality, and expansion of the NIH full-length cDNA project: the Mammalian Gene Collection (MGC).</title>
        <authorList>
            <consortium name="The MGC Project Team"/>
        </authorList>
    </citation>
    <scope>NUCLEOTIDE SEQUENCE [LARGE SCALE MRNA]</scope>
</reference>
<keyword id="KW-0963">Cytoplasm</keyword>
<keyword id="KW-0968">Cytoplasmic vesicle</keyword>
<keyword id="KW-0206">Cytoskeleton</keyword>
<keyword id="KW-0539">Nucleus</keyword>
<keyword id="KW-1185">Reference proteome</keyword>
<keyword id="KW-0804">Transcription</keyword>
<keyword id="KW-0805">Transcription regulation</keyword>
<organism>
    <name type="scientific">Mus musculus</name>
    <name type="common">Mouse</name>
    <dbReference type="NCBI Taxonomy" id="10090"/>
    <lineage>
        <taxon>Eukaryota</taxon>
        <taxon>Metazoa</taxon>
        <taxon>Chordata</taxon>
        <taxon>Craniata</taxon>
        <taxon>Vertebrata</taxon>
        <taxon>Euteleostomi</taxon>
        <taxon>Mammalia</taxon>
        <taxon>Eutheria</taxon>
        <taxon>Euarchontoglires</taxon>
        <taxon>Glires</taxon>
        <taxon>Rodentia</taxon>
        <taxon>Myomorpha</taxon>
        <taxon>Muroidea</taxon>
        <taxon>Muridae</taxon>
        <taxon>Murinae</taxon>
        <taxon>Mus</taxon>
        <taxon>Mus</taxon>
    </lineage>
</organism>
<feature type="chain" id="PRO_0000255658" description="Actin-related protein T1">
    <location>
        <begin position="1"/>
        <end position="376"/>
    </location>
</feature>
<proteinExistence type="evidence at transcript level"/>
<dbReference type="EMBL" id="AK006855">
    <property type="protein sequence ID" value="BAB24765.1"/>
    <property type="molecule type" value="mRNA"/>
</dbReference>
<dbReference type="EMBL" id="BC116431">
    <property type="protein sequence ID" value="AAI16432.1"/>
    <property type="molecule type" value="mRNA"/>
</dbReference>
<dbReference type="EMBL" id="BC116432">
    <property type="protein sequence ID" value="AAI16433.1"/>
    <property type="molecule type" value="mRNA"/>
</dbReference>
<dbReference type="CCDS" id="CCDS30102.1"/>
<dbReference type="RefSeq" id="NP_082790.1">
    <property type="nucleotide sequence ID" value="NM_028514.3"/>
</dbReference>
<dbReference type="SMR" id="Q9D9J3"/>
<dbReference type="FunCoup" id="Q9D9J3">
    <property type="interactions" value="6"/>
</dbReference>
<dbReference type="STRING" id="10090.ENSMUSP00000062570"/>
<dbReference type="PhosphoSitePlus" id="Q9D9J3"/>
<dbReference type="PaxDb" id="10090-ENSMUSP00000062570"/>
<dbReference type="ProteomicsDB" id="285856"/>
<dbReference type="Antibodypedia" id="511">
    <property type="antibodies" value="114 antibodies from 23 providers"/>
</dbReference>
<dbReference type="DNASU" id="73360"/>
<dbReference type="Ensembl" id="ENSMUST00000059466.3">
    <property type="protein sequence ID" value="ENSMUSP00000062570.3"/>
    <property type="gene ID" value="ENSMUSG00000046615.3"/>
</dbReference>
<dbReference type="GeneID" id="73360"/>
<dbReference type="KEGG" id="mmu:73360"/>
<dbReference type="UCSC" id="uc009tbj.1">
    <property type="organism name" value="mouse"/>
</dbReference>
<dbReference type="AGR" id="MGI:1920610"/>
<dbReference type="CTD" id="139741"/>
<dbReference type="MGI" id="MGI:1920610">
    <property type="gene designation" value="Actrt1"/>
</dbReference>
<dbReference type="VEuPathDB" id="HostDB:ENSMUSG00000046615"/>
<dbReference type="eggNOG" id="KOG0676">
    <property type="taxonomic scope" value="Eukaryota"/>
</dbReference>
<dbReference type="GeneTree" id="ENSGT00940000162451"/>
<dbReference type="HOGENOM" id="CLU_027965_0_2_1"/>
<dbReference type="InParanoid" id="Q9D9J3"/>
<dbReference type="OMA" id="RWFSAWI"/>
<dbReference type="OrthoDB" id="10053773at2759"/>
<dbReference type="PhylomeDB" id="Q9D9J3"/>
<dbReference type="TreeFam" id="TF354237"/>
<dbReference type="BioGRID-ORCS" id="73360">
    <property type="hits" value="4 hits in 77 CRISPR screens"/>
</dbReference>
<dbReference type="PRO" id="PR:Q9D9J3"/>
<dbReference type="Proteomes" id="UP000000589">
    <property type="component" value="Chromosome X"/>
</dbReference>
<dbReference type="RNAct" id="Q9D9J3">
    <property type="molecule type" value="protein"/>
</dbReference>
<dbReference type="Bgee" id="ENSMUSG00000046615">
    <property type="expression patterns" value="Expressed in spermatid and 18 other cell types or tissues"/>
</dbReference>
<dbReference type="GO" id="GO:0001669">
    <property type="term" value="C:acrosomal vesicle"/>
    <property type="evidence" value="ECO:0000250"/>
    <property type="project" value="UniProtKB"/>
</dbReference>
<dbReference type="GO" id="GO:0005737">
    <property type="term" value="C:cytoplasm"/>
    <property type="evidence" value="ECO:0000250"/>
    <property type="project" value="UniProtKB"/>
</dbReference>
<dbReference type="GO" id="GO:0005856">
    <property type="term" value="C:cytoskeleton"/>
    <property type="evidence" value="ECO:0007669"/>
    <property type="project" value="UniProtKB-SubCell"/>
</dbReference>
<dbReference type="GO" id="GO:0005634">
    <property type="term" value="C:nucleus"/>
    <property type="evidence" value="ECO:0000250"/>
    <property type="project" value="UniProtKB"/>
</dbReference>
<dbReference type="GO" id="GO:0003682">
    <property type="term" value="F:chromatin binding"/>
    <property type="evidence" value="ECO:0000250"/>
    <property type="project" value="UniProtKB"/>
</dbReference>
<dbReference type="GO" id="GO:0045892">
    <property type="term" value="P:negative regulation of DNA-templated transcription"/>
    <property type="evidence" value="ECO:0000250"/>
    <property type="project" value="UniProtKB"/>
</dbReference>
<dbReference type="GO" id="GO:0008589">
    <property type="term" value="P:regulation of smoothened signaling pathway"/>
    <property type="evidence" value="ECO:0000250"/>
    <property type="project" value="UniProtKB"/>
</dbReference>
<dbReference type="CDD" id="cd13397">
    <property type="entry name" value="ASKHA_NBD_actin_Arp-T1-3"/>
    <property type="match status" value="1"/>
</dbReference>
<dbReference type="FunFam" id="3.90.640.10:FF:000007">
    <property type="entry name" value="Actin like 7B"/>
    <property type="match status" value="1"/>
</dbReference>
<dbReference type="FunFam" id="3.30.420.40:FF:000018">
    <property type="entry name" value="Actin-like protein (Centractin)"/>
    <property type="match status" value="1"/>
</dbReference>
<dbReference type="Gene3D" id="3.30.420.40">
    <property type="match status" value="2"/>
</dbReference>
<dbReference type="Gene3D" id="3.90.640.10">
    <property type="entry name" value="Actin, Chain A, domain 4"/>
    <property type="match status" value="1"/>
</dbReference>
<dbReference type="InterPro" id="IPR004000">
    <property type="entry name" value="Actin"/>
</dbReference>
<dbReference type="InterPro" id="IPR043129">
    <property type="entry name" value="ATPase_NBD"/>
</dbReference>
<dbReference type="PANTHER" id="PTHR11937">
    <property type="entry name" value="ACTIN"/>
    <property type="match status" value="1"/>
</dbReference>
<dbReference type="Pfam" id="PF00022">
    <property type="entry name" value="Actin"/>
    <property type="match status" value="1"/>
</dbReference>
<dbReference type="PRINTS" id="PR00190">
    <property type="entry name" value="ACTIN"/>
</dbReference>
<dbReference type="SMART" id="SM00268">
    <property type="entry name" value="ACTIN"/>
    <property type="match status" value="1"/>
</dbReference>
<dbReference type="SUPFAM" id="SSF53067">
    <property type="entry name" value="Actin-like ATPase domain"/>
    <property type="match status" value="2"/>
</dbReference>
<name>ACTT1_MOUSE</name>
<evidence type="ECO:0000250" key="1">
    <source>
        <dbReference type="UniProtKB" id="Q8TDG2"/>
    </source>
</evidence>
<evidence type="ECO:0000305" key="2"/>
<protein>
    <recommendedName>
        <fullName>Actin-related protein T1</fullName>
    </recommendedName>
</protein>
<accession>Q9D9J3</accession>